<name>OADB_HAEDU</name>
<protein>
    <recommendedName>
        <fullName>Oxaloacetate decarboxylase beta chain</fullName>
        <ecNumber>7.2.4.2</ecNumber>
    </recommendedName>
</protein>
<dbReference type="EC" id="7.2.4.2"/>
<dbReference type="EMBL" id="AF200362">
    <property type="protein sequence ID" value="AAF14627.1"/>
    <property type="molecule type" value="Genomic_DNA"/>
</dbReference>
<dbReference type="EMBL" id="AE017143">
    <property type="protein sequence ID" value="AAP95685.1"/>
    <property type="molecule type" value="Genomic_DNA"/>
</dbReference>
<dbReference type="RefSeq" id="WP_010944735.1">
    <property type="nucleotide sequence ID" value="NC_002940.2"/>
</dbReference>
<dbReference type="SMR" id="Q9RF98"/>
<dbReference type="STRING" id="233412.HD_0782"/>
<dbReference type="KEGG" id="hdu:HD_0782"/>
<dbReference type="eggNOG" id="COG1883">
    <property type="taxonomic scope" value="Bacteria"/>
</dbReference>
<dbReference type="HOGENOM" id="CLU_036168_0_0_6"/>
<dbReference type="OrthoDB" id="9783838at2"/>
<dbReference type="Proteomes" id="UP000001022">
    <property type="component" value="Chromosome"/>
</dbReference>
<dbReference type="GO" id="GO:0005886">
    <property type="term" value="C:plasma membrane"/>
    <property type="evidence" value="ECO:0007669"/>
    <property type="project" value="UniProtKB-SubCell"/>
</dbReference>
<dbReference type="GO" id="GO:0015451">
    <property type="term" value="F:decarboxylation-driven active transmembrane transporter activity"/>
    <property type="evidence" value="ECO:0007669"/>
    <property type="project" value="UniProtKB-EC"/>
</dbReference>
<dbReference type="GO" id="GO:0016829">
    <property type="term" value="F:lyase activity"/>
    <property type="evidence" value="ECO:0007669"/>
    <property type="project" value="InterPro"/>
</dbReference>
<dbReference type="GO" id="GO:0006814">
    <property type="term" value="P:sodium ion transport"/>
    <property type="evidence" value="ECO:0007669"/>
    <property type="project" value="UniProtKB-KW"/>
</dbReference>
<dbReference type="InterPro" id="IPR005661">
    <property type="entry name" value="OadB_MmdB"/>
</dbReference>
<dbReference type="NCBIfam" id="TIGR01109">
    <property type="entry name" value="Na_pump_decarbB"/>
    <property type="match status" value="1"/>
</dbReference>
<dbReference type="PANTHER" id="PTHR35806">
    <property type="entry name" value="OXALOACETATE DECARBOXYLASE BETA CHAIN 2"/>
    <property type="match status" value="1"/>
</dbReference>
<dbReference type="PANTHER" id="PTHR35806:SF1">
    <property type="entry name" value="OXALOACETATE DECARBOXYLASE BETA CHAIN 2"/>
    <property type="match status" value="1"/>
</dbReference>
<dbReference type="Pfam" id="PF03977">
    <property type="entry name" value="OAD_beta"/>
    <property type="match status" value="1"/>
</dbReference>
<dbReference type="PIRSF" id="PIRSF015658">
    <property type="entry name" value="MmdB_OadB"/>
    <property type="match status" value="1"/>
</dbReference>
<evidence type="ECO:0000250" key="1"/>
<evidence type="ECO:0000255" key="2"/>
<evidence type="ECO:0000305" key="3"/>
<reference key="1">
    <citation type="submission" date="1999-10" db="EMBL/GenBank/DDBJ databases">
        <title>Identification of a putative oxaloacetate decarboxylase and cytochrome-c-peroxidase in Haemophilus ducreyi.</title>
        <authorList>
            <person name="Zaretzky F.R."/>
            <person name="Cole L.E."/>
            <person name="Kawula T.H."/>
        </authorList>
    </citation>
    <scope>NUCLEOTIDE SEQUENCE [GENOMIC DNA]</scope>
    <source>
        <strain>35000HP / ATCC 700724</strain>
    </source>
</reference>
<reference key="2">
    <citation type="submission" date="2003-06" db="EMBL/GenBank/DDBJ databases">
        <title>The complete genome sequence of Haemophilus ducreyi.</title>
        <authorList>
            <person name="Munson R.S. Jr."/>
            <person name="Ray W.C."/>
            <person name="Mahairas G."/>
            <person name="Sabo P."/>
            <person name="Mungur R."/>
            <person name="Johnson L."/>
            <person name="Nguyen D."/>
            <person name="Wang J."/>
            <person name="Forst C."/>
            <person name="Hood L."/>
        </authorList>
    </citation>
    <scope>NUCLEOTIDE SEQUENCE [LARGE SCALE GENOMIC DNA]</scope>
    <source>
        <strain>35000HP / ATCC 700724</strain>
    </source>
</reference>
<organism>
    <name type="scientific">Haemophilus ducreyi (strain 35000HP / ATCC 700724)</name>
    <dbReference type="NCBI Taxonomy" id="233412"/>
    <lineage>
        <taxon>Bacteria</taxon>
        <taxon>Pseudomonadati</taxon>
        <taxon>Pseudomonadota</taxon>
        <taxon>Gammaproteobacteria</taxon>
        <taxon>Pasteurellales</taxon>
        <taxon>Pasteurellaceae</taxon>
        <taxon>Haemophilus</taxon>
    </lineage>
</organism>
<comment type="function">
    <text evidence="1">Catalyzes the decarboxylation of oxaloacetate coupled to Na(+) translocation.</text>
</comment>
<comment type="catalytic activity">
    <reaction>
        <text>oxaloacetate + 2 Na(+)(in) + H(+) = pyruvate + 2 Na(+)(out) + CO2</text>
        <dbReference type="Rhea" id="RHEA:57724"/>
        <dbReference type="ChEBI" id="CHEBI:15361"/>
        <dbReference type="ChEBI" id="CHEBI:15378"/>
        <dbReference type="ChEBI" id="CHEBI:16452"/>
        <dbReference type="ChEBI" id="CHEBI:16526"/>
        <dbReference type="ChEBI" id="CHEBI:29101"/>
        <dbReference type="EC" id="7.2.4.2"/>
    </reaction>
</comment>
<comment type="cofactor">
    <cofactor evidence="1">
        <name>Na(+)</name>
        <dbReference type="ChEBI" id="CHEBI:29101"/>
    </cofactor>
</comment>
<comment type="subunit">
    <text evidence="1">Heterotrimer of an alpha, a beta and a gamma subunit.</text>
</comment>
<comment type="subcellular location">
    <subcellularLocation>
        <location evidence="1">Cell membrane</location>
        <topology evidence="1">Multi-pass membrane protein</topology>
    </subcellularLocation>
</comment>
<comment type="similarity">
    <text evidence="3">Belongs to the GcdB/MmdB/OadB family.</text>
</comment>
<gene>
    <name type="primary">oadB</name>
    <name type="ordered locus">HD_0782</name>
</gene>
<keyword id="KW-1003">Cell membrane</keyword>
<keyword id="KW-0406">Ion transport</keyword>
<keyword id="KW-0472">Membrane</keyword>
<keyword id="KW-1185">Reference proteome</keyword>
<keyword id="KW-0915">Sodium</keyword>
<keyword id="KW-0739">Sodium transport</keyword>
<keyword id="KW-1278">Translocase</keyword>
<keyword id="KW-0812">Transmembrane</keyword>
<keyword id="KW-1133">Transmembrane helix</keyword>
<keyword id="KW-0813">Transport</keyword>
<sequence length="435" mass="45816">MESIIALFQGMGIMHITLGQVIMIIVSLILLWLAIARRFEPLLLLPIGFGGLLSNIPEAGLAMTALDHLLHYAHTEQLTIIAEKVNSSSLDVHTIKQAIAFAPPSVQNELEVIASDLGYNAGILALFYKVAIGYGVAPLIIFMGVGAMTDFGPLLANPRTLLLGAAAQFGIFTTVLGALGLNWLGIIDFSLPQAAAIGIIGGADGPTAIYLASKLAPELLGAIAVAAYSYMALVPLIQPPIMKALTTEQERKIRMVQLRTVSAREKIVFPIVLLLLVALLLPDAAPLLGMFCFGNLMRASGVVERLNETAQNALINIVTIFLGLSVGAKLVADKFLQPQTLGILLLGIVAFAIGTASGVIMAKIMNAFSKHKINPLIGSAGVSAVPMAARVSNKIGLEADKQNFLLMHAMGPNVAGVISSAIAAGIMLKYISTMI</sequence>
<accession>Q9RF98</accession>
<feature type="chain" id="PRO_0000218562" description="Oxaloacetate decarboxylase beta chain">
    <location>
        <begin position="1"/>
        <end position="435"/>
    </location>
</feature>
<feature type="transmembrane region" description="Helical" evidence="2">
    <location>
        <begin position="13"/>
        <end position="35"/>
    </location>
</feature>
<feature type="transmembrane region" description="Helical" evidence="2">
    <location>
        <begin position="42"/>
        <end position="64"/>
    </location>
</feature>
<feature type="transmembrane region" description="Helical" evidence="2">
    <location>
        <begin position="123"/>
        <end position="145"/>
    </location>
</feature>
<feature type="transmembrane region" description="Helical" evidence="2">
    <location>
        <begin position="165"/>
        <end position="187"/>
    </location>
</feature>
<feature type="transmembrane region" description="Helical" evidence="2">
    <location>
        <begin position="215"/>
        <end position="237"/>
    </location>
</feature>
<feature type="transmembrane region" description="Helical" evidence="2">
    <location>
        <begin position="267"/>
        <end position="289"/>
    </location>
</feature>
<feature type="transmembrane region" description="Helical" evidence="2">
    <location>
        <begin position="309"/>
        <end position="328"/>
    </location>
</feature>
<feature type="transmembrane region" description="Helical" evidence="2">
    <location>
        <begin position="340"/>
        <end position="362"/>
    </location>
</feature>
<feature type="transmembrane region" description="Helical" evidence="2">
    <location>
        <begin position="404"/>
        <end position="426"/>
    </location>
</feature>
<proteinExistence type="inferred from homology"/>